<accession>A4IXH9</accession>
<gene>
    <name evidence="1" type="primary">ubiE</name>
    <name type="ordered locus">FTW_0751</name>
</gene>
<reference key="1">
    <citation type="journal article" date="2007" name="PLoS ONE">
        <title>Complete genomic characterization of a pathogenic A.II strain of Francisella tularensis subspecies tularensis.</title>
        <authorList>
            <person name="Beckstrom-Sternberg S.M."/>
            <person name="Auerbach R.K."/>
            <person name="Godbole S."/>
            <person name="Pearson J.V."/>
            <person name="Beckstrom-Sternberg J.S."/>
            <person name="Deng Z."/>
            <person name="Munk C."/>
            <person name="Kubota K."/>
            <person name="Zhou Y."/>
            <person name="Bruce D."/>
            <person name="Noronha J."/>
            <person name="Scheuermann R.H."/>
            <person name="Wang A."/>
            <person name="Wei X."/>
            <person name="Wang J."/>
            <person name="Hao J."/>
            <person name="Wagner D.M."/>
            <person name="Brettin T.S."/>
            <person name="Brown N."/>
            <person name="Gilna P."/>
            <person name="Keim P.S."/>
        </authorList>
    </citation>
    <scope>NUCLEOTIDE SEQUENCE [LARGE SCALE GENOMIC DNA]</scope>
    <source>
        <strain>WY96-3418</strain>
    </source>
</reference>
<feature type="chain" id="PRO_1000056253" description="Ubiquinone/menaquinone biosynthesis C-methyltransferase UbiE">
    <location>
        <begin position="1"/>
        <end position="250"/>
    </location>
</feature>
<feature type="binding site" evidence="1">
    <location>
        <position position="73"/>
    </location>
    <ligand>
        <name>S-adenosyl-L-methionine</name>
        <dbReference type="ChEBI" id="CHEBI:59789"/>
    </ligand>
</feature>
<feature type="binding site" evidence="1">
    <location>
        <position position="94"/>
    </location>
    <ligand>
        <name>S-adenosyl-L-methionine</name>
        <dbReference type="ChEBI" id="CHEBI:59789"/>
    </ligand>
</feature>
<feature type="binding site" evidence="1">
    <location>
        <begin position="122"/>
        <end position="123"/>
    </location>
    <ligand>
        <name>S-adenosyl-L-methionine</name>
        <dbReference type="ChEBI" id="CHEBI:59789"/>
    </ligand>
</feature>
<feature type="binding site" evidence="1">
    <location>
        <position position="139"/>
    </location>
    <ligand>
        <name>S-adenosyl-L-methionine</name>
        <dbReference type="ChEBI" id="CHEBI:59789"/>
    </ligand>
</feature>
<comment type="function">
    <text evidence="1">Methyltransferase required for the conversion of demethylmenaquinol (DMKH2) to menaquinol (MKH2) and the conversion of 2-polyprenyl-6-methoxy-1,4-benzoquinol (DDMQH2) to 2-polyprenyl-3-methyl-6-methoxy-1,4-benzoquinol (DMQH2).</text>
</comment>
<comment type="catalytic activity">
    <reaction evidence="1">
        <text>a 2-demethylmenaquinol + S-adenosyl-L-methionine = a menaquinol + S-adenosyl-L-homocysteine + H(+)</text>
        <dbReference type="Rhea" id="RHEA:42640"/>
        <dbReference type="Rhea" id="RHEA-COMP:9539"/>
        <dbReference type="Rhea" id="RHEA-COMP:9563"/>
        <dbReference type="ChEBI" id="CHEBI:15378"/>
        <dbReference type="ChEBI" id="CHEBI:18151"/>
        <dbReference type="ChEBI" id="CHEBI:55437"/>
        <dbReference type="ChEBI" id="CHEBI:57856"/>
        <dbReference type="ChEBI" id="CHEBI:59789"/>
        <dbReference type="EC" id="2.1.1.163"/>
    </reaction>
</comment>
<comment type="catalytic activity">
    <reaction evidence="1">
        <text>a 2-methoxy-6-(all-trans-polyprenyl)benzene-1,4-diol + S-adenosyl-L-methionine = a 5-methoxy-2-methyl-3-(all-trans-polyprenyl)benzene-1,4-diol + S-adenosyl-L-homocysteine + H(+)</text>
        <dbReference type="Rhea" id="RHEA:28286"/>
        <dbReference type="Rhea" id="RHEA-COMP:10858"/>
        <dbReference type="Rhea" id="RHEA-COMP:10859"/>
        <dbReference type="ChEBI" id="CHEBI:15378"/>
        <dbReference type="ChEBI" id="CHEBI:57856"/>
        <dbReference type="ChEBI" id="CHEBI:59789"/>
        <dbReference type="ChEBI" id="CHEBI:84166"/>
        <dbReference type="ChEBI" id="CHEBI:84167"/>
        <dbReference type="EC" id="2.1.1.201"/>
    </reaction>
</comment>
<comment type="pathway">
    <text evidence="1">Quinol/quinone metabolism; menaquinone biosynthesis; menaquinol from 1,4-dihydroxy-2-naphthoate: step 2/2.</text>
</comment>
<comment type="pathway">
    <text evidence="1">Cofactor biosynthesis; ubiquinone biosynthesis.</text>
</comment>
<comment type="similarity">
    <text evidence="1">Belongs to the class I-like SAM-binding methyltransferase superfamily. MenG/UbiE family.</text>
</comment>
<proteinExistence type="inferred from homology"/>
<evidence type="ECO:0000255" key="1">
    <source>
        <dbReference type="HAMAP-Rule" id="MF_01813"/>
    </source>
</evidence>
<dbReference type="EC" id="2.1.1.163" evidence="1"/>
<dbReference type="EC" id="2.1.1.201" evidence="1"/>
<dbReference type="EMBL" id="CP000608">
    <property type="protein sequence ID" value="ABO46631.1"/>
    <property type="molecule type" value="Genomic_DNA"/>
</dbReference>
<dbReference type="RefSeq" id="WP_003025855.1">
    <property type="nucleotide sequence ID" value="NC_009257.1"/>
</dbReference>
<dbReference type="SMR" id="A4IXH9"/>
<dbReference type="KEGG" id="ftw:FTW_0751"/>
<dbReference type="HOGENOM" id="CLU_037990_0_0_6"/>
<dbReference type="UniPathway" id="UPA00079">
    <property type="reaction ID" value="UER00169"/>
</dbReference>
<dbReference type="UniPathway" id="UPA00232"/>
<dbReference type="GO" id="GO:0008425">
    <property type="term" value="F:2-methoxy-6-polyprenyl-1,4-benzoquinol methyltransferase activity"/>
    <property type="evidence" value="ECO:0007669"/>
    <property type="project" value="UniProtKB-UniRule"/>
</dbReference>
<dbReference type="GO" id="GO:0043770">
    <property type="term" value="F:demethylmenaquinone methyltransferase activity"/>
    <property type="evidence" value="ECO:0007669"/>
    <property type="project" value="UniProtKB-UniRule"/>
</dbReference>
<dbReference type="GO" id="GO:0009060">
    <property type="term" value="P:aerobic respiration"/>
    <property type="evidence" value="ECO:0007669"/>
    <property type="project" value="UniProtKB-UniRule"/>
</dbReference>
<dbReference type="GO" id="GO:0009234">
    <property type="term" value="P:menaquinone biosynthetic process"/>
    <property type="evidence" value="ECO:0007669"/>
    <property type="project" value="UniProtKB-UniRule"/>
</dbReference>
<dbReference type="GO" id="GO:0032259">
    <property type="term" value="P:methylation"/>
    <property type="evidence" value="ECO:0007669"/>
    <property type="project" value="UniProtKB-KW"/>
</dbReference>
<dbReference type="CDD" id="cd02440">
    <property type="entry name" value="AdoMet_MTases"/>
    <property type="match status" value="1"/>
</dbReference>
<dbReference type="FunFam" id="3.40.50.150:FF:000014">
    <property type="entry name" value="Ubiquinone/menaquinone biosynthesis C-methyltransferase UbiE"/>
    <property type="match status" value="1"/>
</dbReference>
<dbReference type="Gene3D" id="3.40.50.150">
    <property type="entry name" value="Vaccinia Virus protein VP39"/>
    <property type="match status" value="1"/>
</dbReference>
<dbReference type="HAMAP" id="MF_01813">
    <property type="entry name" value="MenG_UbiE_methyltr"/>
    <property type="match status" value="1"/>
</dbReference>
<dbReference type="InterPro" id="IPR029063">
    <property type="entry name" value="SAM-dependent_MTases_sf"/>
</dbReference>
<dbReference type="InterPro" id="IPR004033">
    <property type="entry name" value="UbiE/COQ5_MeTrFase"/>
</dbReference>
<dbReference type="InterPro" id="IPR023576">
    <property type="entry name" value="UbiE/COQ5_MeTrFase_CS"/>
</dbReference>
<dbReference type="NCBIfam" id="TIGR01934">
    <property type="entry name" value="MenG_MenH_UbiE"/>
    <property type="match status" value="1"/>
</dbReference>
<dbReference type="NCBIfam" id="NF001240">
    <property type="entry name" value="PRK00216.1-1"/>
    <property type="match status" value="1"/>
</dbReference>
<dbReference type="NCBIfam" id="NF001242">
    <property type="entry name" value="PRK00216.1-3"/>
    <property type="match status" value="1"/>
</dbReference>
<dbReference type="NCBIfam" id="NF001244">
    <property type="entry name" value="PRK00216.1-5"/>
    <property type="match status" value="1"/>
</dbReference>
<dbReference type="PANTHER" id="PTHR43591:SF24">
    <property type="entry name" value="2-METHOXY-6-POLYPRENYL-1,4-BENZOQUINOL METHYLASE, MITOCHONDRIAL"/>
    <property type="match status" value="1"/>
</dbReference>
<dbReference type="PANTHER" id="PTHR43591">
    <property type="entry name" value="METHYLTRANSFERASE"/>
    <property type="match status" value="1"/>
</dbReference>
<dbReference type="Pfam" id="PF01209">
    <property type="entry name" value="Ubie_methyltran"/>
    <property type="match status" value="1"/>
</dbReference>
<dbReference type="SUPFAM" id="SSF53335">
    <property type="entry name" value="S-adenosyl-L-methionine-dependent methyltransferases"/>
    <property type="match status" value="1"/>
</dbReference>
<dbReference type="PROSITE" id="PS51608">
    <property type="entry name" value="SAM_MT_UBIE"/>
    <property type="match status" value="1"/>
</dbReference>
<dbReference type="PROSITE" id="PS01183">
    <property type="entry name" value="UBIE_1"/>
    <property type="match status" value="1"/>
</dbReference>
<dbReference type="PROSITE" id="PS01184">
    <property type="entry name" value="UBIE_2"/>
    <property type="match status" value="1"/>
</dbReference>
<sequence>MSKENKTTDFGFTQVPWEEKQKKVAGVFHSVAAKYDLMNDLMSFGIHRIWKKQTIAKSGVHKGDNVLDLAGGTGDLAYKFCQMVGQQGKVILSDINSSMLEVGKEKLTNKGCVGNIEYVQANAECLPFPDNYFDCITISFGLRNVTDKDKALASMCRVLKPGGRLLVLEFSKPIIPLLSKVYDEYSFKALPFLGKIITQDAESYKYLAESIRKHPDQQTLKQMMYDAGFDNVEYQNMTGGIVALHIGYKY</sequence>
<keyword id="KW-0474">Menaquinone biosynthesis</keyword>
<keyword id="KW-0489">Methyltransferase</keyword>
<keyword id="KW-0949">S-adenosyl-L-methionine</keyword>
<keyword id="KW-0808">Transferase</keyword>
<keyword id="KW-0831">Ubiquinone biosynthesis</keyword>
<name>UBIE_FRATW</name>
<protein>
    <recommendedName>
        <fullName evidence="1">Ubiquinone/menaquinone biosynthesis C-methyltransferase UbiE</fullName>
        <ecNumber evidence="1">2.1.1.163</ecNumber>
        <ecNumber evidence="1">2.1.1.201</ecNumber>
    </recommendedName>
    <alternativeName>
        <fullName evidence="1">2-methoxy-6-polyprenyl-1,4-benzoquinol methylase</fullName>
    </alternativeName>
    <alternativeName>
        <fullName evidence="1">Demethylmenaquinone methyltransferase</fullName>
    </alternativeName>
</protein>
<organism>
    <name type="scientific">Francisella tularensis subsp. tularensis (strain WY96-3418)</name>
    <dbReference type="NCBI Taxonomy" id="418136"/>
    <lineage>
        <taxon>Bacteria</taxon>
        <taxon>Pseudomonadati</taxon>
        <taxon>Pseudomonadota</taxon>
        <taxon>Gammaproteobacteria</taxon>
        <taxon>Thiotrichales</taxon>
        <taxon>Francisellaceae</taxon>
        <taxon>Francisella</taxon>
    </lineage>
</organism>